<evidence type="ECO:0000255" key="1">
    <source>
        <dbReference type="HAMAP-Rule" id="MF_01803"/>
    </source>
</evidence>
<comment type="function">
    <text evidence="1">Involved in chromosome condensation, segregation and cell cycle progression. May participate in facilitating chromosome segregation by condensation DNA from both sides of a centrally located replisome during cell division. Not required for mini-F plasmid partitioning. Probably acts via its interaction with MukB and MukE. Overexpression results in anucleate cells. It has a calcium binding activity.</text>
</comment>
<comment type="subunit">
    <text evidence="1">Interacts, and probably forms a ternary complex, with MukE and MukB via its C-terminal region. The complex formation is stimulated by calcium or magnesium. It is required for an interaction between MukE and MukB.</text>
</comment>
<comment type="subcellular location">
    <subcellularLocation>
        <location evidence="1">Cytoplasm</location>
        <location evidence="1">Nucleoid</location>
    </subcellularLocation>
    <text evidence="1">Restricted to the nucleoid region.</text>
</comment>
<comment type="similarity">
    <text evidence="1">Belongs to the MukF family.</text>
</comment>
<name>MUKF_VIBA3</name>
<proteinExistence type="inferred from homology"/>
<keyword id="KW-0106">Calcium</keyword>
<keyword id="KW-0131">Cell cycle</keyword>
<keyword id="KW-0132">Cell division</keyword>
<keyword id="KW-0159">Chromosome partition</keyword>
<keyword id="KW-0963">Cytoplasm</keyword>
<keyword id="KW-0226">DNA condensation</keyword>
<reference key="1">
    <citation type="submission" date="2009-02" db="EMBL/GenBank/DDBJ databases">
        <title>Vibrio splendidus str. LGP32 complete genome.</title>
        <authorList>
            <person name="Mazel D."/>
            <person name="Le Roux F."/>
        </authorList>
    </citation>
    <scope>NUCLEOTIDE SEQUENCE [LARGE SCALE GENOMIC DNA]</scope>
    <source>
        <strain>LGP32</strain>
    </source>
</reference>
<feature type="chain" id="PRO_1000187523" description="Chromosome partition protein MukF">
    <location>
        <begin position="1"/>
        <end position="445"/>
    </location>
</feature>
<feature type="region of interest" description="Leucine-zipper">
    <location>
        <begin position="213"/>
        <end position="241"/>
    </location>
</feature>
<protein>
    <recommendedName>
        <fullName evidence="1">Chromosome partition protein MukF</fullName>
    </recommendedName>
</protein>
<dbReference type="EMBL" id="FM954972">
    <property type="protein sequence ID" value="CAV18214.1"/>
    <property type="molecule type" value="Genomic_DNA"/>
</dbReference>
<dbReference type="SMR" id="B7VMH0"/>
<dbReference type="STRING" id="575788.VS_1094"/>
<dbReference type="KEGG" id="vsp:VS_1094"/>
<dbReference type="PATRIC" id="fig|575788.5.peg.2417"/>
<dbReference type="eggNOG" id="COG3006">
    <property type="taxonomic scope" value="Bacteria"/>
</dbReference>
<dbReference type="HOGENOM" id="CLU_049853_0_0_6"/>
<dbReference type="Proteomes" id="UP000009100">
    <property type="component" value="Chromosome 1"/>
</dbReference>
<dbReference type="GO" id="GO:0005737">
    <property type="term" value="C:cytoplasm"/>
    <property type="evidence" value="ECO:0007669"/>
    <property type="project" value="UniProtKB-UniRule"/>
</dbReference>
<dbReference type="GO" id="GO:0009295">
    <property type="term" value="C:nucleoid"/>
    <property type="evidence" value="ECO:0007669"/>
    <property type="project" value="UniProtKB-SubCell"/>
</dbReference>
<dbReference type="GO" id="GO:0005509">
    <property type="term" value="F:calcium ion binding"/>
    <property type="evidence" value="ECO:0007669"/>
    <property type="project" value="UniProtKB-UniRule"/>
</dbReference>
<dbReference type="GO" id="GO:0051301">
    <property type="term" value="P:cell division"/>
    <property type="evidence" value="ECO:0007669"/>
    <property type="project" value="UniProtKB-KW"/>
</dbReference>
<dbReference type="GO" id="GO:0030261">
    <property type="term" value="P:chromosome condensation"/>
    <property type="evidence" value="ECO:0007669"/>
    <property type="project" value="UniProtKB-KW"/>
</dbReference>
<dbReference type="GO" id="GO:0007059">
    <property type="term" value="P:chromosome segregation"/>
    <property type="evidence" value="ECO:0007669"/>
    <property type="project" value="UniProtKB-UniRule"/>
</dbReference>
<dbReference type="GO" id="GO:0006260">
    <property type="term" value="P:DNA replication"/>
    <property type="evidence" value="ECO:0007669"/>
    <property type="project" value="UniProtKB-UniRule"/>
</dbReference>
<dbReference type="CDD" id="cd16337">
    <property type="entry name" value="MukF_C"/>
    <property type="match status" value="1"/>
</dbReference>
<dbReference type="CDD" id="cd16335">
    <property type="entry name" value="MukF_N"/>
    <property type="match status" value="1"/>
</dbReference>
<dbReference type="Gene3D" id="1.20.58.590">
    <property type="entry name" value="Chromosome partition protein MukF, middle domain"/>
    <property type="match status" value="1"/>
</dbReference>
<dbReference type="Gene3D" id="1.10.225.40">
    <property type="entry name" value="MukF, C-terminal domain"/>
    <property type="match status" value="1"/>
</dbReference>
<dbReference type="Gene3D" id="1.10.10.10">
    <property type="entry name" value="Winged helix-like DNA-binding domain superfamily/Winged helix DNA-binding domain"/>
    <property type="match status" value="1"/>
</dbReference>
<dbReference type="HAMAP" id="MF_01803">
    <property type="entry name" value="MukF"/>
    <property type="match status" value="1"/>
</dbReference>
<dbReference type="InterPro" id="IPR005582">
    <property type="entry name" value="Chromosome_partition_MukF"/>
</dbReference>
<dbReference type="InterPro" id="IPR033441">
    <property type="entry name" value="MukF_C"/>
</dbReference>
<dbReference type="InterPro" id="IPR038198">
    <property type="entry name" value="MukF_C_sf"/>
</dbReference>
<dbReference type="InterPro" id="IPR033440">
    <property type="entry name" value="MukF_M"/>
</dbReference>
<dbReference type="InterPro" id="IPR036141">
    <property type="entry name" value="MukF_M_sp"/>
</dbReference>
<dbReference type="InterPro" id="IPR033439">
    <property type="entry name" value="MukF_WHTH"/>
</dbReference>
<dbReference type="InterPro" id="IPR036388">
    <property type="entry name" value="WH-like_DNA-bd_sf"/>
</dbReference>
<dbReference type="InterPro" id="IPR036390">
    <property type="entry name" value="WH_DNA-bd_sf"/>
</dbReference>
<dbReference type="NCBIfam" id="NF003615">
    <property type="entry name" value="PRK05260.1"/>
    <property type="match status" value="1"/>
</dbReference>
<dbReference type="Pfam" id="PF03882">
    <property type="entry name" value="KicB"/>
    <property type="match status" value="1"/>
</dbReference>
<dbReference type="Pfam" id="PF17193">
    <property type="entry name" value="MukF_C"/>
    <property type="match status" value="1"/>
</dbReference>
<dbReference type="Pfam" id="PF17192">
    <property type="entry name" value="MukF_M"/>
    <property type="match status" value="1"/>
</dbReference>
<dbReference type="PIRSF" id="PIRSF018282">
    <property type="entry name" value="MukF"/>
    <property type="match status" value="1"/>
</dbReference>
<dbReference type="SUPFAM" id="SSF140570">
    <property type="entry name" value="MukF C-terminal domain-like"/>
    <property type="match status" value="1"/>
</dbReference>
<dbReference type="SUPFAM" id="SSF46785">
    <property type="entry name" value="Winged helix' DNA-binding domain"/>
    <property type="match status" value="1"/>
</dbReference>
<sequence length="445" mass="50819">MSEMTQTAEEQPIDELVGWVKQHDFSLNLPPERLAFLIAIAVLSNERFDEELGEGELHDAFTIVTRLFEDTGEASAFRANNAINELVKQKLISRFTSEITDGASIYRLSPLAIGISDYYLRHRQFSKLKLSIQLSMVADEMAKAIEAAQKGGTPGHWRRNVYGVLKYSVGEIFDQIDLNQRVMDEQQQTVKQQIADLLNKDWREAINNCESLLSETSATLKELQDTLQAAGDELQTQILDIQEIVYGDDELEFVGETLFGLQMKLDRITSWGQQAIDLWIGYDRHVHKFIRTAIDMDKNRAFSQRLRQSVTDYFDAPWLLTYADAEKLTDLRDEALVLRDDEVMGQAPIDVEYEEFEQVNDLLSERIGDMLKAHKQQGAPIDLGLVLRDYLAAHPRTHHFDLARIVVDQAVRLGYSESDYQAIQPDWQAINDFGAKVQANVINKY</sequence>
<organism>
    <name type="scientific">Vibrio atlanticus (strain LGP32)</name>
    <name type="common">Vibrio splendidus (strain Mel32)</name>
    <dbReference type="NCBI Taxonomy" id="575788"/>
    <lineage>
        <taxon>Bacteria</taxon>
        <taxon>Pseudomonadati</taxon>
        <taxon>Pseudomonadota</taxon>
        <taxon>Gammaproteobacteria</taxon>
        <taxon>Vibrionales</taxon>
        <taxon>Vibrionaceae</taxon>
        <taxon>Vibrio</taxon>
    </lineage>
</organism>
<gene>
    <name evidence="1" type="primary">mukF</name>
    <name type="ordered locus">VS_1094</name>
</gene>
<accession>B7VMH0</accession>